<dbReference type="EMBL" id="U18997">
    <property type="protein sequence ID" value="AAA58179.1"/>
    <property type="status" value="ALT_INIT"/>
    <property type="molecule type" value="Genomic_DNA"/>
</dbReference>
<dbReference type="EMBL" id="U00096">
    <property type="protein sequence ID" value="AAC76407.2"/>
    <property type="molecule type" value="Genomic_DNA"/>
</dbReference>
<dbReference type="EMBL" id="AP009048">
    <property type="protein sequence ID" value="BAE77909.1"/>
    <property type="molecule type" value="Genomic_DNA"/>
</dbReference>
<dbReference type="PIR" id="A65133">
    <property type="entry name" value="A65133"/>
</dbReference>
<dbReference type="RefSeq" id="NP_417841.2">
    <property type="nucleotide sequence ID" value="NC_000913.3"/>
</dbReference>
<dbReference type="RefSeq" id="WP_001295165.1">
    <property type="nucleotide sequence ID" value="NZ_SSZK01000008.1"/>
</dbReference>
<dbReference type="SMR" id="P45551"/>
<dbReference type="BioGRID" id="4261372">
    <property type="interactions" value="208"/>
</dbReference>
<dbReference type="FunCoup" id="P45551">
    <property type="interactions" value="136"/>
</dbReference>
<dbReference type="STRING" id="511145.b3382"/>
<dbReference type="PaxDb" id="511145-b3382"/>
<dbReference type="EnsemblBacteria" id="AAC76407">
    <property type="protein sequence ID" value="AAC76407"/>
    <property type="gene ID" value="b3382"/>
</dbReference>
<dbReference type="GeneID" id="947888"/>
<dbReference type="KEGG" id="ecj:JW5696"/>
<dbReference type="KEGG" id="eco:b3382"/>
<dbReference type="KEGG" id="ecoc:C3026_18355"/>
<dbReference type="PATRIC" id="fig|511145.12.peg.3475"/>
<dbReference type="EchoBASE" id="EB2756"/>
<dbReference type="eggNOG" id="ENOG5032T80">
    <property type="taxonomic scope" value="Bacteria"/>
</dbReference>
<dbReference type="HOGENOM" id="CLU_146117_0_1_6"/>
<dbReference type="InParanoid" id="P45551"/>
<dbReference type="OMA" id="GQMFITH"/>
<dbReference type="OrthoDB" id="6447514at2"/>
<dbReference type="BioCyc" id="EcoCyc:G7734-MONOMER"/>
<dbReference type="PRO" id="PR:P45551"/>
<dbReference type="Proteomes" id="UP000000625">
    <property type="component" value="Chromosome"/>
</dbReference>
<dbReference type="GO" id="GO:0006355">
    <property type="term" value="P:regulation of DNA-templated transcription"/>
    <property type="evidence" value="ECO:0007669"/>
    <property type="project" value="InterPro"/>
</dbReference>
<dbReference type="Gene3D" id="1.10.1790.10">
    <property type="entry name" value="PRD domain"/>
    <property type="match status" value="1"/>
</dbReference>
<dbReference type="InterPro" id="IPR011608">
    <property type="entry name" value="PRD"/>
</dbReference>
<dbReference type="InterPro" id="IPR036634">
    <property type="entry name" value="PRD_sf"/>
</dbReference>
<dbReference type="SUPFAM" id="SSF63520">
    <property type="entry name" value="PTS-regulatory domain, PRD"/>
    <property type="match status" value="1"/>
</dbReference>
<dbReference type="PROSITE" id="PS51372">
    <property type="entry name" value="PRD_2"/>
    <property type="match status" value="1"/>
</dbReference>
<feature type="chain" id="PRO_0000169534" description="Uncharacterized protein YhfY">
    <location>
        <begin position="1"/>
        <end position="120"/>
    </location>
</feature>
<feature type="domain" description="PRD" evidence="1">
    <location>
        <begin position="13"/>
        <end position="119"/>
    </location>
</feature>
<name>YHFY_ECOLI</name>
<reference key="1">
    <citation type="journal article" date="1997" name="Science">
        <title>The complete genome sequence of Escherichia coli K-12.</title>
        <authorList>
            <person name="Blattner F.R."/>
            <person name="Plunkett G. III"/>
            <person name="Bloch C.A."/>
            <person name="Perna N.T."/>
            <person name="Burland V."/>
            <person name="Riley M."/>
            <person name="Collado-Vides J."/>
            <person name="Glasner J.D."/>
            <person name="Rode C.K."/>
            <person name="Mayhew G.F."/>
            <person name="Gregor J."/>
            <person name="Davis N.W."/>
            <person name="Kirkpatrick H.A."/>
            <person name="Goeden M.A."/>
            <person name="Rose D.J."/>
            <person name="Mau B."/>
            <person name="Shao Y."/>
        </authorList>
    </citation>
    <scope>NUCLEOTIDE SEQUENCE [LARGE SCALE GENOMIC DNA]</scope>
    <source>
        <strain>K12 / MG1655 / ATCC 47076</strain>
    </source>
</reference>
<reference key="2">
    <citation type="journal article" date="2006" name="Mol. Syst. Biol.">
        <title>Highly accurate genome sequences of Escherichia coli K-12 strains MG1655 and W3110.</title>
        <authorList>
            <person name="Hayashi K."/>
            <person name="Morooka N."/>
            <person name="Yamamoto Y."/>
            <person name="Fujita K."/>
            <person name="Isono K."/>
            <person name="Choi S."/>
            <person name="Ohtsubo E."/>
            <person name="Baba T."/>
            <person name="Wanner B.L."/>
            <person name="Mori H."/>
            <person name="Horiuchi T."/>
        </authorList>
    </citation>
    <scope>NUCLEOTIDE SEQUENCE [LARGE SCALE GENOMIC DNA]</scope>
    <source>
        <strain>K12 / W3110 / ATCC 27325 / DSM 5911</strain>
    </source>
</reference>
<gene>
    <name type="primary">yhfY</name>
    <name type="ordered locus">b3382</name>
    <name type="ordered locus">JW5696</name>
</gene>
<accession>P45551</accession>
<accession>Q2M747</accession>
<organism>
    <name type="scientific">Escherichia coli (strain K12)</name>
    <dbReference type="NCBI Taxonomy" id="83333"/>
    <lineage>
        <taxon>Bacteria</taxon>
        <taxon>Pseudomonadati</taxon>
        <taxon>Pseudomonadota</taxon>
        <taxon>Gammaproteobacteria</taxon>
        <taxon>Enterobacterales</taxon>
        <taxon>Enterobacteriaceae</taxon>
        <taxon>Escherichia</taxon>
    </lineage>
</organism>
<comment type="sequence caution" evidence="2">
    <conflict type="erroneous initiation">
        <sequence resource="EMBL-CDS" id="AAA58179"/>
    </conflict>
    <text>Extended N-terminus.</text>
</comment>
<proteinExistence type="predicted"/>
<evidence type="ECO:0000255" key="1">
    <source>
        <dbReference type="PROSITE-ProRule" id="PRU00704"/>
    </source>
</evidence>
<evidence type="ECO:0000305" key="2"/>
<sequence>METRLNLLCEAGVIDKDICKGMMQVVNVLETECHLPVRSEQGTMAMTHMASALMRSRRGEEIEPLDNELLAELAQSSHWQAVVQLHQVLLKEFALEVNPCEEGYLLANLYGLWMAANEEV</sequence>
<keyword id="KW-1185">Reference proteome</keyword>
<protein>
    <recommendedName>
        <fullName>Uncharacterized protein YhfY</fullName>
    </recommendedName>
</protein>